<name>LFG3_MOUSE</name>
<comment type="function">
    <text evidence="5 6">Negatively regulates aortic matrix metalloproteinase-9 (MMP9) production and may play a protective role in vascular remodeling.</text>
</comment>
<comment type="subcellular location">
    <subcellularLocation>
        <location evidence="1">Membrane</location>
        <topology evidence="1">Multi-pass membrane protein</topology>
    </subcellularLocation>
    <subcellularLocation>
        <location evidence="1">Lysosome membrane</location>
    </subcellularLocation>
    <subcellularLocation>
        <location evidence="1">Endosome membrane</location>
    </subcellularLocation>
</comment>
<comment type="alternative products">
    <event type="alternative splicing"/>
    <isoform>
        <id>Q8BJZ3-1</id>
        <name>1</name>
        <sequence type="displayed"/>
    </isoform>
    <isoform>
        <id>Q8BJZ3-2</id>
        <name>2</name>
        <sequence type="described" ref="VSP_008995 VSP_008996"/>
    </isoform>
</comment>
<comment type="tissue specificity">
    <text evidence="5">Expressed in most tissues except spleen, thymus and testis.</text>
</comment>
<comment type="disruption phenotype">
    <text evidence="5 6">Mice (older than 14 months) are prone to aortic dilation as well as cystic medial degeneration (CMD).</text>
</comment>
<comment type="miscellaneous">
    <molecule>Isoform 2</molecule>
    <text evidence="8">Due to non-canonical splice donor and acceptor sites.</text>
</comment>
<comment type="similarity">
    <text evidence="8">Belongs to the BI1 family. LFG subfamily.</text>
</comment>
<feature type="chain" id="PRO_0000179091" description="Protein lifeguard 3">
    <location>
        <begin position="1"/>
        <end position="309"/>
    </location>
</feature>
<feature type="transmembrane region" description="Helical" evidence="3">
    <location>
        <begin position="101"/>
        <end position="121"/>
    </location>
</feature>
<feature type="transmembrane region" description="Helical" evidence="3">
    <location>
        <begin position="132"/>
        <end position="152"/>
    </location>
</feature>
<feature type="transmembrane region" description="Helical" evidence="3">
    <location>
        <begin position="163"/>
        <end position="183"/>
    </location>
</feature>
<feature type="transmembrane region" description="Helical" evidence="3">
    <location>
        <begin position="188"/>
        <end position="208"/>
    </location>
</feature>
<feature type="transmembrane region" description="Helical" evidence="3">
    <location>
        <begin position="221"/>
        <end position="241"/>
    </location>
</feature>
<feature type="transmembrane region" description="Helical" evidence="3">
    <location>
        <begin position="244"/>
        <end position="264"/>
    </location>
</feature>
<feature type="transmembrane region" description="Helical" evidence="3">
    <location>
        <begin position="286"/>
        <end position="306"/>
    </location>
</feature>
<feature type="region of interest" description="Disordered" evidence="4">
    <location>
        <begin position="1"/>
        <end position="31"/>
    </location>
</feature>
<feature type="region of interest" description="Disordered" evidence="4">
    <location>
        <begin position="64"/>
        <end position="84"/>
    </location>
</feature>
<feature type="compositionally biased region" description="Basic and acidic residues" evidence="4">
    <location>
        <begin position="70"/>
        <end position="84"/>
    </location>
</feature>
<feature type="modified residue" description="Phosphoserine" evidence="9">
    <location>
        <position position="79"/>
    </location>
</feature>
<feature type="modified residue" description="Phosphoserine" evidence="2">
    <location>
        <position position="81"/>
    </location>
</feature>
<feature type="splice variant" id="VSP_008995" description="In isoform 2." evidence="7">
    <original>FTFVEPVGKYVRNNVAVYYVSYAVFLVTYLTLACCQGPRRRFPW</original>
    <variation>STWSMQLWGPSVSPCSWLMTHSWSWGTGSTPSARRTTSQAPYRSTQI</variation>
    <location>
        <begin position="118"/>
        <end position="161"/>
    </location>
</feature>
<feature type="splice variant" id="VSP_008996" description="In isoform 2." evidence="7">
    <location>
        <begin position="162"/>
        <end position="309"/>
    </location>
</feature>
<feature type="sequence conflict" description="In Ref. 1; BAC43762." evidence="8" ref="1">
    <original>D</original>
    <variation>N</variation>
    <location>
        <position position="162"/>
    </location>
</feature>
<feature type="sequence conflict" description="In Ref. 1; BAC43762." evidence="8" ref="1">
    <original>N</original>
    <variation>T</variation>
    <location>
        <position position="186"/>
    </location>
</feature>
<proteinExistence type="evidence at protein level"/>
<protein>
    <recommendedName>
        <fullName>Protein lifeguard 3</fullName>
    </recommendedName>
    <alternativeName>
        <fullName>Responsive to centrifugal force and shear stress gene 1 protein</fullName>
        <shortName>Protein RECS1</shortName>
    </alternativeName>
    <alternativeName>
        <fullName>Transmembrane BAX inhibitor motif-containing protein 1</fullName>
    </alternativeName>
</protein>
<dbReference type="EMBL" id="AB097685">
    <property type="protein sequence ID" value="BAC43762.1"/>
    <property type="molecule type" value="mRNA"/>
</dbReference>
<dbReference type="EMBL" id="AK077689">
    <property type="protein sequence ID" value="BAC36957.1"/>
    <property type="molecule type" value="mRNA"/>
</dbReference>
<dbReference type="EMBL" id="BC004752">
    <property type="protein sequence ID" value="AAH04752.1"/>
    <property type="molecule type" value="mRNA"/>
</dbReference>
<dbReference type="CCDS" id="CCDS15044.1">
    <molecule id="Q8BJZ3-1"/>
</dbReference>
<dbReference type="RefSeq" id="NP_081430.3">
    <property type="nucleotide sequence ID" value="NM_027154.5"/>
</dbReference>
<dbReference type="SMR" id="Q8BJZ3"/>
<dbReference type="FunCoup" id="Q8BJZ3">
    <property type="interactions" value="130"/>
</dbReference>
<dbReference type="STRING" id="10090.ENSMUSP00000109427"/>
<dbReference type="iPTMnet" id="Q8BJZ3"/>
<dbReference type="PhosphoSitePlus" id="Q8BJZ3"/>
<dbReference type="jPOST" id="Q8BJZ3"/>
<dbReference type="PaxDb" id="10090-ENSMUSP00000016309"/>
<dbReference type="ProteomicsDB" id="291942">
    <molecule id="Q8BJZ3-1"/>
</dbReference>
<dbReference type="ProteomicsDB" id="291943">
    <molecule id="Q8BJZ3-2"/>
</dbReference>
<dbReference type="Pumba" id="Q8BJZ3"/>
<dbReference type="GeneID" id="69660"/>
<dbReference type="KEGG" id="mmu:69660"/>
<dbReference type="AGR" id="MGI:1916910"/>
<dbReference type="CTD" id="64114"/>
<dbReference type="MGI" id="MGI:1916910">
    <property type="gene designation" value="Tmbim1"/>
</dbReference>
<dbReference type="eggNOG" id="KOG2322">
    <property type="taxonomic scope" value="Eukaryota"/>
</dbReference>
<dbReference type="InParanoid" id="Q8BJZ3"/>
<dbReference type="OrthoDB" id="7933078at2759"/>
<dbReference type="PhylomeDB" id="Q8BJZ3"/>
<dbReference type="Reactome" id="R-MMU-6798695">
    <property type="pathway name" value="Neutrophil degranulation"/>
</dbReference>
<dbReference type="BioGRID-ORCS" id="69660">
    <property type="hits" value="0 hits in 78 CRISPR screens"/>
</dbReference>
<dbReference type="PRO" id="PR:Q8BJZ3"/>
<dbReference type="Proteomes" id="UP000000589">
    <property type="component" value="Unplaced"/>
</dbReference>
<dbReference type="RNAct" id="Q8BJZ3">
    <property type="molecule type" value="protein"/>
</dbReference>
<dbReference type="GO" id="GO:0010008">
    <property type="term" value="C:endosome membrane"/>
    <property type="evidence" value="ECO:0000250"/>
    <property type="project" value="UniProtKB"/>
</dbReference>
<dbReference type="GO" id="GO:0005794">
    <property type="term" value="C:Golgi apparatus"/>
    <property type="evidence" value="ECO:0000250"/>
    <property type="project" value="UniProtKB"/>
</dbReference>
<dbReference type="GO" id="GO:0005765">
    <property type="term" value="C:lysosomal membrane"/>
    <property type="evidence" value="ECO:0000250"/>
    <property type="project" value="UniProtKB"/>
</dbReference>
<dbReference type="GO" id="GO:0005123">
    <property type="term" value="F:death receptor binding"/>
    <property type="evidence" value="ECO:0000250"/>
    <property type="project" value="UniProtKB"/>
</dbReference>
<dbReference type="GO" id="GO:0043086">
    <property type="term" value="P:negative regulation of catalytic activity"/>
    <property type="evidence" value="ECO:0000315"/>
    <property type="project" value="UniProtKB"/>
</dbReference>
<dbReference type="GO" id="GO:1902042">
    <property type="term" value="P:negative regulation of extrinsic apoptotic signaling pathway via death domain receptors"/>
    <property type="evidence" value="ECO:0000250"/>
    <property type="project" value="UniProtKB"/>
</dbReference>
<dbReference type="GO" id="GO:1902045">
    <property type="term" value="P:negative regulation of Fas signaling pathway"/>
    <property type="evidence" value="ECO:0000250"/>
    <property type="project" value="UniProtKB"/>
</dbReference>
<dbReference type="GO" id="GO:1903077">
    <property type="term" value="P:negative regulation of protein localization to plasma membrane"/>
    <property type="evidence" value="ECO:0000250"/>
    <property type="project" value="UniProtKB"/>
</dbReference>
<dbReference type="GO" id="GO:2000504">
    <property type="term" value="P:positive regulation of blood vessel remodeling"/>
    <property type="evidence" value="ECO:0000315"/>
    <property type="project" value="UniProtKB"/>
</dbReference>
<dbReference type="GO" id="GO:0050848">
    <property type="term" value="P:regulation of calcium-mediated signaling"/>
    <property type="evidence" value="ECO:0000250"/>
    <property type="project" value="UniProtKB"/>
</dbReference>
<dbReference type="CDD" id="cd10428">
    <property type="entry name" value="LFG_like"/>
    <property type="match status" value="1"/>
</dbReference>
<dbReference type="InterPro" id="IPR006214">
    <property type="entry name" value="Bax_inhibitor_1-related"/>
</dbReference>
<dbReference type="PANTHER" id="PTHR23291">
    <property type="entry name" value="BAX INHIBITOR-RELATED"/>
    <property type="match status" value="1"/>
</dbReference>
<dbReference type="PANTHER" id="PTHR23291:SF35">
    <property type="entry name" value="PROTEIN LIFEGUARD 3"/>
    <property type="match status" value="1"/>
</dbReference>
<dbReference type="Pfam" id="PF01027">
    <property type="entry name" value="Bax1-I"/>
    <property type="match status" value="1"/>
</dbReference>
<organism>
    <name type="scientific">Mus musculus</name>
    <name type="common">Mouse</name>
    <dbReference type="NCBI Taxonomy" id="10090"/>
    <lineage>
        <taxon>Eukaryota</taxon>
        <taxon>Metazoa</taxon>
        <taxon>Chordata</taxon>
        <taxon>Craniata</taxon>
        <taxon>Vertebrata</taxon>
        <taxon>Euteleostomi</taxon>
        <taxon>Mammalia</taxon>
        <taxon>Eutheria</taxon>
        <taxon>Euarchontoglires</taxon>
        <taxon>Glires</taxon>
        <taxon>Rodentia</taxon>
        <taxon>Myomorpha</taxon>
        <taxon>Muroidea</taxon>
        <taxon>Muridae</taxon>
        <taxon>Murinae</taxon>
        <taxon>Mus</taxon>
        <taxon>Mus</taxon>
    </lineage>
</organism>
<reference key="1">
    <citation type="submission" date="2002-12" db="EMBL/GenBank/DDBJ databases">
        <title>Mus musculus RECS1 (responsive to centrifugal force and shear stress gene 1).</title>
        <authorList>
            <person name="Zhao H."/>
            <person name="Kimura S."/>
            <person name="Nojima H."/>
        </authorList>
    </citation>
    <scope>NUCLEOTIDE SEQUENCE [MRNA] (ISOFORM 1)</scope>
</reference>
<reference key="2">
    <citation type="journal article" date="2005" name="Science">
        <title>The transcriptional landscape of the mammalian genome.</title>
        <authorList>
            <person name="Carninci P."/>
            <person name="Kasukawa T."/>
            <person name="Katayama S."/>
            <person name="Gough J."/>
            <person name="Frith M.C."/>
            <person name="Maeda N."/>
            <person name="Oyama R."/>
            <person name="Ravasi T."/>
            <person name="Lenhard B."/>
            <person name="Wells C."/>
            <person name="Kodzius R."/>
            <person name="Shimokawa K."/>
            <person name="Bajic V.B."/>
            <person name="Brenner S.E."/>
            <person name="Batalov S."/>
            <person name="Forrest A.R."/>
            <person name="Zavolan M."/>
            <person name="Davis M.J."/>
            <person name="Wilming L.G."/>
            <person name="Aidinis V."/>
            <person name="Allen J.E."/>
            <person name="Ambesi-Impiombato A."/>
            <person name="Apweiler R."/>
            <person name="Aturaliya R.N."/>
            <person name="Bailey T.L."/>
            <person name="Bansal M."/>
            <person name="Baxter L."/>
            <person name="Beisel K.W."/>
            <person name="Bersano T."/>
            <person name="Bono H."/>
            <person name="Chalk A.M."/>
            <person name="Chiu K.P."/>
            <person name="Choudhary V."/>
            <person name="Christoffels A."/>
            <person name="Clutterbuck D.R."/>
            <person name="Crowe M.L."/>
            <person name="Dalla E."/>
            <person name="Dalrymple B.P."/>
            <person name="de Bono B."/>
            <person name="Della Gatta G."/>
            <person name="di Bernardo D."/>
            <person name="Down T."/>
            <person name="Engstrom P."/>
            <person name="Fagiolini M."/>
            <person name="Faulkner G."/>
            <person name="Fletcher C.F."/>
            <person name="Fukushima T."/>
            <person name="Furuno M."/>
            <person name="Futaki S."/>
            <person name="Gariboldi M."/>
            <person name="Georgii-Hemming P."/>
            <person name="Gingeras T.R."/>
            <person name="Gojobori T."/>
            <person name="Green R.E."/>
            <person name="Gustincich S."/>
            <person name="Harbers M."/>
            <person name="Hayashi Y."/>
            <person name="Hensch T.K."/>
            <person name="Hirokawa N."/>
            <person name="Hill D."/>
            <person name="Huminiecki L."/>
            <person name="Iacono M."/>
            <person name="Ikeo K."/>
            <person name="Iwama A."/>
            <person name="Ishikawa T."/>
            <person name="Jakt M."/>
            <person name="Kanapin A."/>
            <person name="Katoh M."/>
            <person name="Kawasawa Y."/>
            <person name="Kelso J."/>
            <person name="Kitamura H."/>
            <person name="Kitano H."/>
            <person name="Kollias G."/>
            <person name="Krishnan S.P."/>
            <person name="Kruger A."/>
            <person name="Kummerfeld S.K."/>
            <person name="Kurochkin I.V."/>
            <person name="Lareau L.F."/>
            <person name="Lazarevic D."/>
            <person name="Lipovich L."/>
            <person name="Liu J."/>
            <person name="Liuni S."/>
            <person name="McWilliam S."/>
            <person name="Madan Babu M."/>
            <person name="Madera M."/>
            <person name="Marchionni L."/>
            <person name="Matsuda H."/>
            <person name="Matsuzawa S."/>
            <person name="Miki H."/>
            <person name="Mignone F."/>
            <person name="Miyake S."/>
            <person name="Morris K."/>
            <person name="Mottagui-Tabar S."/>
            <person name="Mulder N."/>
            <person name="Nakano N."/>
            <person name="Nakauchi H."/>
            <person name="Ng P."/>
            <person name="Nilsson R."/>
            <person name="Nishiguchi S."/>
            <person name="Nishikawa S."/>
            <person name="Nori F."/>
            <person name="Ohara O."/>
            <person name="Okazaki Y."/>
            <person name="Orlando V."/>
            <person name="Pang K.C."/>
            <person name="Pavan W.J."/>
            <person name="Pavesi G."/>
            <person name="Pesole G."/>
            <person name="Petrovsky N."/>
            <person name="Piazza S."/>
            <person name="Reed J."/>
            <person name="Reid J.F."/>
            <person name="Ring B.Z."/>
            <person name="Ringwald M."/>
            <person name="Rost B."/>
            <person name="Ruan Y."/>
            <person name="Salzberg S.L."/>
            <person name="Sandelin A."/>
            <person name="Schneider C."/>
            <person name="Schoenbach C."/>
            <person name="Sekiguchi K."/>
            <person name="Semple C.A."/>
            <person name="Seno S."/>
            <person name="Sessa L."/>
            <person name="Sheng Y."/>
            <person name="Shibata Y."/>
            <person name="Shimada H."/>
            <person name="Shimada K."/>
            <person name="Silva D."/>
            <person name="Sinclair B."/>
            <person name="Sperling S."/>
            <person name="Stupka E."/>
            <person name="Sugiura K."/>
            <person name="Sultana R."/>
            <person name="Takenaka Y."/>
            <person name="Taki K."/>
            <person name="Tammoja K."/>
            <person name="Tan S.L."/>
            <person name="Tang S."/>
            <person name="Taylor M.S."/>
            <person name="Tegner J."/>
            <person name="Teichmann S.A."/>
            <person name="Ueda H.R."/>
            <person name="van Nimwegen E."/>
            <person name="Verardo R."/>
            <person name="Wei C.L."/>
            <person name="Yagi K."/>
            <person name="Yamanishi H."/>
            <person name="Zabarovsky E."/>
            <person name="Zhu S."/>
            <person name="Zimmer A."/>
            <person name="Hide W."/>
            <person name="Bult C."/>
            <person name="Grimmond S.M."/>
            <person name="Teasdale R.D."/>
            <person name="Liu E.T."/>
            <person name="Brusic V."/>
            <person name="Quackenbush J."/>
            <person name="Wahlestedt C."/>
            <person name="Mattick J.S."/>
            <person name="Hume D.A."/>
            <person name="Kai C."/>
            <person name="Sasaki D."/>
            <person name="Tomaru Y."/>
            <person name="Fukuda S."/>
            <person name="Kanamori-Katayama M."/>
            <person name="Suzuki M."/>
            <person name="Aoki J."/>
            <person name="Arakawa T."/>
            <person name="Iida J."/>
            <person name="Imamura K."/>
            <person name="Itoh M."/>
            <person name="Kato T."/>
            <person name="Kawaji H."/>
            <person name="Kawagashira N."/>
            <person name="Kawashima T."/>
            <person name="Kojima M."/>
            <person name="Kondo S."/>
            <person name="Konno H."/>
            <person name="Nakano K."/>
            <person name="Ninomiya N."/>
            <person name="Nishio T."/>
            <person name="Okada M."/>
            <person name="Plessy C."/>
            <person name="Shibata K."/>
            <person name="Shiraki T."/>
            <person name="Suzuki S."/>
            <person name="Tagami M."/>
            <person name="Waki K."/>
            <person name="Watahiki A."/>
            <person name="Okamura-Oho Y."/>
            <person name="Suzuki H."/>
            <person name="Kawai J."/>
            <person name="Hayashizaki Y."/>
        </authorList>
    </citation>
    <scope>NUCLEOTIDE SEQUENCE [LARGE SCALE MRNA] (ISOFORM 1)</scope>
    <source>
        <strain>C57BL/6J</strain>
    </source>
</reference>
<reference key="3">
    <citation type="journal article" date="2004" name="Genome Res.">
        <title>The status, quality, and expansion of the NIH full-length cDNA project: the Mammalian Gene Collection (MGC).</title>
        <authorList>
            <consortium name="The MGC Project Team"/>
        </authorList>
    </citation>
    <scope>NUCLEOTIDE SEQUENCE [LARGE SCALE MRNA] (ISOFORM 2)</scope>
    <source>
        <tissue>Mammary tumor</tissue>
    </source>
</reference>
<reference key="4">
    <citation type="journal article" date="2006" name="Circ. J.">
        <title>RECS1 is a negative regulator of matrix metalloproteinase-9 production and aged RECS1 knockout mice are prone to aortic dilation.</title>
        <authorList>
            <person name="Zhao H."/>
            <person name="Ito A."/>
            <person name="Sakai N."/>
            <person name="Matsuzawa Y."/>
            <person name="Yamashita S."/>
            <person name="Nojima H."/>
        </authorList>
    </citation>
    <scope>FUNCTION</scope>
    <scope>DISRUPTION PHENOTYPE</scope>
</reference>
<reference key="5">
    <citation type="journal article" date="2006" name="Genes Genet. Syst.">
        <title>RECS1 deficiency in mice induces susceptibility to cystic medial degeneration.</title>
        <authorList>
            <person name="Zhao H."/>
            <person name="Ito A."/>
            <person name="Kimura S.H."/>
            <person name="Yabuta N."/>
            <person name="Sakai N."/>
            <person name="Ikawa M."/>
            <person name="Okabe M."/>
            <person name="Matsuzawa Y."/>
            <person name="Yamashita S."/>
            <person name="Nojima H."/>
        </authorList>
    </citation>
    <scope>FUNCTION</scope>
    <scope>DISRUPTION PHENOTYPE</scope>
    <scope>TISSUE SPECIFICITY</scope>
</reference>
<reference key="6">
    <citation type="journal article" date="2009" name="Apoptosis">
        <title>LFG: a candidate apoptosis regulatory gene family.</title>
        <authorList>
            <person name="Hu L."/>
            <person name="Smith T.F."/>
            <person name="Goldberger G."/>
        </authorList>
    </citation>
    <scope>GENE FAMILY</scope>
    <scope>NOMENCLATURE</scope>
</reference>
<reference key="7">
    <citation type="journal article" date="2009" name="Immunity">
        <title>The phagosomal proteome in interferon-gamma-activated macrophages.</title>
        <authorList>
            <person name="Trost M."/>
            <person name="English L."/>
            <person name="Lemieux S."/>
            <person name="Courcelles M."/>
            <person name="Desjardins M."/>
            <person name="Thibault P."/>
        </authorList>
    </citation>
    <scope>PHOSPHORYLATION [LARGE SCALE ANALYSIS] AT SER-79</scope>
    <scope>IDENTIFICATION BY MASS SPECTROMETRY [LARGE SCALE ANALYSIS]</scope>
</reference>
<evidence type="ECO:0000250" key="1"/>
<evidence type="ECO:0000250" key="2">
    <source>
        <dbReference type="UniProtKB" id="Q969X1"/>
    </source>
</evidence>
<evidence type="ECO:0000255" key="3"/>
<evidence type="ECO:0000256" key="4">
    <source>
        <dbReference type="SAM" id="MobiDB-lite"/>
    </source>
</evidence>
<evidence type="ECO:0000269" key="5">
    <source>
    </source>
</evidence>
<evidence type="ECO:0000269" key="6">
    <source>
    </source>
</evidence>
<evidence type="ECO:0000303" key="7">
    <source>
    </source>
</evidence>
<evidence type="ECO:0000305" key="8"/>
<evidence type="ECO:0007744" key="9">
    <source>
    </source>
</evidence>
<keyword id="KW-0025">Alternative splicing</keyword>
<keyword id="KW-0967">Endosome</keyword>
<keyword id="KW-0458">Lysosome</keyword>
<keyword id="KW-0472">Membrane</keyword>
<keyword id="KW-0597">Phosphoprotein</keyword>
<keyword id="KW-1185">Reference proteome</keyword>
<keyword id="KW-0812">Transmembrane</keyword>
<keyword id="KW-1133">Transmembrane helix</keyword>
<accession>Q8BJZ3</accession>
<accession>Q8CH91</accession>
<accession>Q99KB6</accession>
<gene>
    <name type="primary">Tmbim1</name>
    <name type="synonym">Lfg3</name>
    <name type="synonym">Recs1</name>
</gene>
<sequence length="309" mass="34393">MSNPSAPPPYEDHNPLYPGSPPPGGYGQPSVLPGGYPAYPAYPQPGYGHPAGYPQPVPPVHPMPMNYGHDYNEEERAGSDSFRPGEWDDRKVRHSFIQKVYCIISVQLLITVAIIAIFTFVEPVGKYVRNNVAVYYVSYAVFLVTYLTLACCQGPRRRFPWDIILLTIFTLALGFVTGTISSMYENKAVIIAMIITAVVSISVTIFCFQTKVDFTSCTGLFCVLGIVLMVTGIVTSIVLIFKYIYWLHMVYAALGAICFTLFLAYDTQLVLGNRKHTISPEDYITGALQIYTDIVYIFTFVLQLVGSRD</sequence>